<dbReference type="EMBL" id="BC083693">
    <property type="protein sequence ID" value="AAH83693.1"/>
    <property type="molecule type" value="mRNA"/>
</dbReference>
<dbReference type="RefSeq" id="NP_001014196.1">
    <property type="nucleotide sequence ID" value="NM_001014174.3"/>
</dbReference>
<dbReference type="FunCoup" id="Q5XII8">
    <property type="interactions" value="1922"/>
</dbReference>
<dbReference type="STRING" id="10116.ENSRNOP00000074705"/>
<dbReference type="iPTMnet" id="Q5XII8"/>
<dbReference type="PhosphoSitePlus" id="Q5XII8"/>
<dbReference type="PaxDb" id="10116-ENSRNOP00000046713"/>
<dbReference type="Ensembl" id="ENSRNOT00000046919.6">
    <property type="protein sequence ID" value="ENSRNOP00000046713.3"/>
    <property type="gene ID" value="ENSRNOG00000017758.8"/>
</dbReference>
<dbReference type="GeneID" id="361985"/>
<dbReference type="KEGG" id="rno:361985"/>
<dbReference type="UCSC" id="RGD:1359625">
    <property type="organism name" value="rat"/>
</dbReference>
<dbReference type="AGR" id="RGD:1359625"/>
<dbReference type="CTD" id="361985"/>
<dbReference type="RGD" id="1359625">
    <property type="gene designation" value="LOC361985"/>
</dbReference>
<dbReference type="eggNOG" id="ENOG502QUKH">
    <property type="taxonomic scope" value="Eukaryota"/>
</dbReference>
<dbReference type="GeneTree" id="ENSGT00510000047366"/>
<dbReference type="InParanoid" id="Q5XII8"/>
<dbReference type="PRO" id="PR:Q5XII8"/>
<dbReference type="Proteomes" id="UP000002494">
    <property type="component" value="Chromosome 2"/>
</dbReference>
<dbReference type="Bgee" id="ENSRNOG00000017758">
    <property type="expression patterns" value="Expressed in skeletal muscle tissue and 20 other cell types or tissues"/>
</dbReference>
<dbReference type="ExpressionAtlas" id="Q5XII8">
    <property type="expression patterns" value="baseline and differential"/>
</dbReference>
<dbReference type="GO" id="GO:0005794">
    <property type="term" value="C:Golgi apparatus"/>
    <property type="evidence" value="ECO:0000250"/>
    <property type="project" value="UniProtKB"/>
</dbReference>
<dbReference type="GO" id="GO:0016020">
    <property type="term" value="C:membrane"/>
    <property type="evidence" value="ECO:0007669"/>
    <property type="project" value="UniProtKB-SubCell"/>
</dbReference>
<dbReference type="GO" id="GO:0005739">
    <property type="term" value="C:mitochondrion"/>
    <property type="evidence" value="ECO:0000250"/>
    <property type="project" value="UniProtKB"/>
</dbReference>
<dbReference type="GO" id="GO:0001701">
    <property type="term" value="P:in utero embryonic development"/>
    <property type="evidence" value="ECO:0000266"/>
    <property type="project" value="RGD"/>
</dbReference>
<dbReference type="GO" id="GO:0006909">
    <property type="term" value="P:phagocytosis"/>
    <property type="evidence" value="ECO:0000250"/>
    <property type="project" value="UniProtKB"/>
</dbReference>
<dbReference type="InterPro" id="IPR010876">
    <property type="entry name" value="C1orf43"/>
</dbReference>
<dbReference type="PANTHER" id="PTHR21425">
    <property type="entry name" value="NICE-3"/>
    <property type="match status" value="1"/>
</dbReference>
<dbReference type="PANTHER" id="PTHR21425:SF2">
    <property type="entry name" value="PROTEIN C1ORF43"/>
    <property type="match status" value="1"/>
</dbReference>
<dbReference type="Pfam" id="PF07406">
    <property type="entry name" value="NICE-3"/>
    <property type="match status" value="2"/>
</dbReference>
<protein>
    <recommendedName>
        <fullName>Protein C1orf43 homolog</fullName>
    </recommendedName>
</protein>
<comment type="function">
    <text evidence="1">General regulator of phagocytosis. Required to uptake Gram negative bacterium by macrophages.</text>
</comment>
<comment type="subcellular location">
    <subcellularLocation>
        <location evidence="3">Membrane</location>
        <topology evidence="3">Single-pass membrane protein</topology>
    </subcellularLocation>
    <subcellularLocation>
        <location evidence="1">Golgi apparatus</location>
    </subcellularLocation>
    <subcellularLocation>
        <location evidence="1">Mitochondrion</location>
    </subcellularLocation>
</comment>
<comment type="domain">
    <text evidence="1">N-terminal region is required for phagocytosis of Gram negative bacterium.</text>
</comment>
<sequence length="235" mass="26642">MASSSNWLSGVNVVLVMAYGSLVFVLLFIFVKRQIMRFAMKSRRGPHVPVGHNAPKDLKEEIDIRLSRVQDIKYEPQLLADDDTRLLQLETQGSQKIPFHAEGRHPCSLMGKNFRSYLLDLRNTSTPFKGVRKALIDTLLDGYETARYGTGVFGQSEYLRYQEALSELATVVKARIGSSQRQHQSAAKDLTQSPEMSPTTIQVTYLPSSQKSKRPKHFLELKSFKDNYNTLESTL</sequence>
<name>CA043_RAT</name>
<keyword id="KW-0333">Golgi apparatus</keyword>
<keyword id="KW-0472">Membrane</keyword>
<keyword id="KW-0496">Mitochondrion</keyword>
<keyword id="KW-1185">Reference proteome</keyword>
<keyword id="KW-0812">Transmembrane</keyword>
<keyword id="KW-1133">Transmembrane helix</keyword>
<organism>
    <name type="scientific">Rattus norvegicus</name>
    <name type="common">Rat</name>
    <dbReference type="NCBI Taxonomy" id="10116"/>
    <lineage>
        <taxon>Eukaryota</taxon>
        <taxon>Metazoa</taxon>
        <taxon>Chordata</taxon>
        <taxon>Craniata</taxon>
        <taxon>Vertebrata</taxon>
        <taxon>Euteleostomi</taxon>
        <taxon>Mammalia</taxon>
        <taxon>Eutheria</taxon>
        <taxon>Euarchontoglires</taxon>
        <taxon>Glires</taxon>
        <taxon>Rodentia</taxon>
        <taxon>Myomorpha</taxon>
        <taxon>Muroidea</taxon>
        <taxon>Muridae</taxon>
        <taxon>Murinae</taxon>
        <taxon>Rattus</taxon>
    </lineage>
</organism>
<accession>Q5XII8</accession>
<reference key="1">
    <citation type="journal article" date="2004" name="Genome Res.">
        <title>The status, quality, and expansion of the NIH full-length cDNA project: the Mammalian Gene Collection (MGC).</title>
        <authorList>
            <consortium name="The MGC Project Team"/>
        </authorList>
    </citation>
    <scope>NUCLEOTIDE SEQUENCE [LARGE SCALE MRNA]</scope>
    <source>
        <tissue>Heart</tissue>
    </source>
</reference>
<reference key="2">
    <citation type="journal article" date="2012" name="Nat. Commun.">
        <title>Quantitative maps of protein phosphorylation sites across 14 different rat organs and tissues.</title>
        <authorList>
            <person name="Lundby A."/>
            <person name="Secher A."/>
            <person name="Lage K."/>
            <person name="Nordsborg N.B."/>
            <person name="Dmytriyev A."/>
            <person name="Lundby C."/>
            <person name="Olsen J.V."/>
        </authorList>
    </citation>
    <scope>IDENTIFICATION BY MASS SPECTROMETRY [LARGE SCALE ANALYSIS]</scope>
</reference>
<proteinExistence type="evidence at protein level"/>
<evidence type="ECO:0000250" key="1">
    <source>
        <dbReference type="UniProtKB" id="Q9BWL3"/>
    </source>
</evidence>
<evidence type="ECO:0000255" key="2"/>
<evidence type="ECO:0000305" key="3"/>
<feature type="chain" id="PRO_0000089259" description="Protein C1orf43 homolog">
    <location>
        <begin position="1"/>
        <end position="235"/>
    </location>
</feature>
<feature type="transmembrane region" description="Helical" evidence="2">
    <location>
        <begin position="11"/>
        <end position="31"/>
    </location>
</feature>